<dbReference type="EMBL" id="CP000266">
    <property type="protein sequence ID" value="ABF06330.1"/>
    <property type="molecule type" value="Genomic_DNA"/>
</dbReference>
<dbReference type="RefSeq" id="WP_001216676.1">
    <property type="nucleotide sequence ID" value="NC_008258.1"/>
</dbReference>
<dbReference type="SMR" id="Q0SX85"/>
<dbReference type="GeneID" id="93777623"/>
<dbReference type="KEGG" id="sfv:SFV_4356"/>
<dbReference type="HOGENOM" id="CLU_113441_6_1_6"/>
<dbReference type="Proteomes" id="UP000000659">
    <property type="component" value="Chromosome"/>
</dbReference>
<dbReference type="GO" id="GO:0022627">
    <property type="term" value="C:cytosolic small ribosomal subunit"/>
    <property type="evidence" value="ECO:0007669"/>
    <property type="project" value="TreeGrafter"/>
</dbReference>
<dbReference type="GO" id="GO:0070181">
    <property type="term" value="F:small ribosomal subunit rRNA binding"/>
    <property type="evidence" value="ECO:0007669"/>
    <property type="project" value="TreeGrafter"/>
</dbReference>
<dbReference type="GO" id="GO:0003735">
    <property type="term" value="F:structural constituent of ribosome"/>
    <property type="evidence" value="ECO:0007669"/>
    <property type="project" value="InterPro"/>
</dbReference>
<dbReference type="GO" id="GO:0006412">
    <property type="term" value="P:translation"/>
    <property type="evidence" value="ECO:0007669"/>
    <property type="project" value="UniProtKB-UniRule"/>
</dbReference>
<dbReference type="CDD" id="cd00473">
    <property type="entry name" value="bS6"/>
    <property type="match status" value="1"/>
</dbReference>
<dbReference type="FunFam" id="3.30.70.60:FF:000003">
    <property type="entry name" value="30S ribosomal protein S6"/>
    <property type="match status" value="1"/>
</dbReference>
<dbReference type="Gene3D" id="3.30.70.60">
    <property type="match status" value="1"/>
</dbReference>
<dbReference type="HAMAP" id="MF_00360">
    <property type="entry name" value="Ribosomal_bS6"/>
    <property type="match status" value="1"/>
</dbReference>
<dbReference type="InterPro" id="IPR000529">
    <property type="entry name" value="Ribosomal_bS6"/>
</dbReference>
<dbReference type="InterPro" id="IPR020815">
    <property type="entry name" value="Ribosomal_bS6_CS"/>
</dbReference>
<dbReference type="InterPro" id="IPR035980">
    <property type="entry name" value="Ribosomal_bS6_sf"/>
</dbReference>
<dbReference type="InterPro" id="IPR020814">
    <property type="entry name" value="Ribosomal_S6_plastid/chlpt"/>
</dbReference>
<dbReference type="InterPro" id="IPR014717">
    <property type="entry name" value="Transl_elong_EF1B/ribsomal_bS6"/>
</dbReference>
<dbReference type="NCBIfam" id="TIGR00166">
    <property type="entry name" value="S6"/>
    <property type="match status" value="1"/>
</dbReference>
<dbReference type="PANTHER" id="PTHR21011">
    <property type="entry name" value="MITOCHONDRIAL 28S RIBOSOMAL PROTEIN S6"/>
    <property type="match status" value="1"/>
</dbReference>
<dbReference type="PANTHER" id="PTHR21011:SF1">
    <property type="entry name" value="SMALL RIBOSOMAL SUBUNIT PROTEIN BS6M"/>
    <property type="match status" value="1"/>
</dbReference>
<dbReference type="Pfam" id="PF01250">
    <property type="entry name" value="Ribosomal_S6"/>
    <property type="match status" value="1"/>
</dbReference>
<dbReference type="SUPFAM" id="SSF54995">
    <property type="entry name" value="Ribosomal protein S6"/>
    <property type="match status" value="1"/>
</dbReference>
<dbReference type="PROSITE" id="PS01048">
    <property type="entry name" value="RIBOSOMAL_S6"/>
    <property type="match status" value="1"/>
</dbReference>
<name>RS6_SHIF8</name>
<proteinExistence type="inferred from homology"/>
<reference key="1">
    <citation type="journal article" date="2006" name="BMC Genomics">
        <title>Complete genome sequence of Shigella flexneri 5b and comparison with Shigella flexneri 2a.</title>
        <authorList>
            <person name="Nie H."/>
            <person name="Yang F."/>
            <person name="Zhang X."/>
            <person name="Yang J."/>
            <person name="Chen L."/>
            <person name="Wang J."/>
            <person name="Xiong Z."/>
            <person name="Peng J."/>
            <person name="Sun L."/>
            <person name="Dong J."/>
            <person name="Xue Y."/>
            <person name="Xu X."/>
            <person name="Chen S."/>
            <person name="Yao Z."/>
            <person name="Shen Y."/>
            <person name="Jin Q."/>
        </authorList>
    </citation>
    <scope>NUCLEOTIDE SEQUENCE [LARGE SCALE GENOMIC DNA]</scope>
    <source>
        <strain>8401</strain>
    </source>
</reference>
<organism>
    <name type="scientific">Shigella flexneri serotype 5b (strain 8401)</name>
    <dbReference type="NCBI Taxonomy" id="373384"/>
    <lineage>
        <taxon>Bacteria</taxon>
        <taxon>Pseudomonadati</taxon>
        <taxon>Pseudomonadota</taxon>
        <taxon>Gammaproteobacteria</taxon>
        <taxon>Enterobacterales</taxon>
        <taxon>Enterobacteriaceae</taxon>
        <taxon>Shigella</taxon>
    </lineage>
</organism>
<keyword id="KW-0007">Acetylation</keyword>
<keyword id="KW-0687">Ribonucleoprotein</keyword>
<keyword id="KW-0689">Ribosomal protein</keyword>
<keyword id="KW-0694">RNA-binding</keyword>
<keyword id="KW-0699">rRNA-binding</keyword>
<gene>
    <name evidence="1" type="primary">rpsF</name>
    <name type="ordered locus">SFV_4356</name>
</gene>
<comment type="function">
    <text evidence="1">Binds together with bS18 to 16S ribosomal RNA.</text>
</comment>
<comment type="similarity">
    <text evidence="1">Belongs to the bacterial ribosomal protein bS6 family.</text>
</comment>
<feature type="chain" id="PRO_1000005354" description="Small ribosomal subunit protein bS6">
    <location>
        <begin position="1"/>
        <end position="131"/>
    </location>
</feature>
<feature type="region of interest" description="Disordered" evidence="2">
    <location>
        <begin position="98"/>
        <end position="131"/>
    </location>
</feature>
<feature type="compositionally biased region" description="Basic and acidic residues" evidence="2">
    <location>
        <begin position="104"/>
        <end position="116"/>
    </location>
</feature>
<feature type="compositionally biased region" description="Acidic residues" evidence="2">
    <location>
        <begin position="120"/>
        <end position="131"/>
    </location>
</feature>
<feature type="modified residue" description="N6-acetyllysine" evidence="1">
    <location>
        <position position="93"/>
    </location>
</feature>
<accession>Q0SX85</accession>
<evidence type="ECO:0000255" key="1">
    <source>
        <dbReference type="HAMAP-Rule" id="MF_00360"/>
    </source>
</evidence>
<evidence type="ECO:0000256" key="2">
    <source>
        <dbReference type="SAM" id="MobiDB-lite"/>
    </source>
</evidence>
<evidence type="ECO:0000305" key="3"/>
<sequence length="131" mass="15187">MRHYEIVFMVHPDQSEQVPGMIERYTAAITGAEGKIHRLEDWGRRQLAYPINKLHKAHYVLMNVEAPQEVIDELETTFRFNDAVIRSMVMRTKHAVTEASPMVKAKDERRERRDDFANETADDAEAGDSEE</sequence>
<protein>
    <recommendedName>
        <fullName evidence="1">Small ribosomal subunit protein bS6</fullName>
    </recommendedName>
    <alternativeName>
        <fullName evidence="3">30S ribosomal protein S6</fullName>
    </alternativeName>
</protein>